<organism>
    <name type="scientific">Californiconus californicus</name>
    <name type="common">California cone</name>
    <name type="synonym">Conus californicus</name>
    <dbReference type="NCBI Taxonomy" id="1736779"/>
    <lineage>
        <taxon>Eukaryota</taxon>
        <taxon>Metazoa</taxon>
        <taxon>Spiralia</taxon>
        <taxon>Lophotrochozoa</taxon>
        <taxon>Mollusca</taxon>
        <taxon>Gastropoda</taxon>
        <taxon>Caenogastropoda</taxon>
        <taxon>Neogastropoda</taxon>
        <taxon>Conoidea</taxon>
        <taxon>Conidae</taxon>
        <taxon>Californiconus</taxon>
    </lineage>
</organism>
<name>O129B_CONCL</name>
<proteinExistence type="evidence at protein level"/>
<reference key="1">
    <citation type="journal article" date="2019" name="Toxins">
        <title>The diversified O-superfamily in Californiconus californicus presents a conotoxin with antimycobacterial activity.</title>
        <authorList>
            <person name="Bernaldez-Sarabia J."/>
            <person name="Figueroa-Montiel A."/>
            <person name="Duenas S."/>
            <person name="Cervantes-Luevano K."/>
            <person name="Beltran J.A."/>
            <person name="Ortiz E."/>
            <person name="Jimenez S."/>
            <person name="Possani L.D."/>
            <person name="Paniagua-Solis J.F."/>
            <person name="Gonzalez-Canudas J."/>
            <person name="Licea-Navarro A."/>
        </authorList>
    </citation>
    <scope>NUCLEOTIDE SEQUENCE [MRNA]</scope>
    <scope>PARTIAL PROTEIN SEQUENCE</scope>
    <scope>FUNCTION</scope>
    <scope>SUBCELLULAR LOCATION</scope>
    <source>
        <tissue>Venom</tissue>
        <tissue>Venom duct</tissue>
    </source>
</reference>
<dbReference type="GO" id="GO:0005576">
    <property type="term" value="C:extracellular region"/>
    <property type="evidence" value="ECO:0007669"/>
    <property type="project" value="UniProtKB-SubCell"/>
</dbReference>
<dbReference type="GO" id="GO:0090729">
    <property type="term" value="F:toxin activity"/>
    <property type="evidence" value="ECO:0007669"/>
    <property type="project" value="UniProtKB-KW"/>
</dbReference>
<evidence type="ECO:0000255" key="1"/>
<evidence type="ECO:0000269" key="2">
    <source>
    </source>
</evidence>
<evidence type="ECO:0000303" key="3">
    <source>
    </source>
</evidence>
<evidence type="ECO:0000305" key="4"/>
<evidence type="ECO:0000305" key="5">
    <source>
    </source>
</evidence>
<accession>P0DTX7</accession>
<sequence>MKLTCVLIVAVLILAACQFTAANMARYGKTQIARSDVKSIDARRPKCCCVCGVVGRKCCSTWKDCHPVHLPCPSSG</sequence>
<feature type="signal peptide" evidence="1">
    <location>
        <begin position="1"/>
        <end position="43"/>
    </location>
</feature>
<feature type="chain" id="PRO_0000450959" description="Conotoxin Cal29b" evidence="4">
    <location>
        <begin position="44"/>
        <end position="76"/>
    </location>
</feature>
<comment type="function">
    <text evidence="2 4">Is able to inhibit the growth of Mycobacterium tuberculosis (MIC=0.22-3.52 uM against strain H37Rv and 2 multidrug-resistant strains) (PubMed:30791616). May also show neurotoxic activity (Probable).</text>
</comment>
<comment type="subcellular location">
    <subcellularLocation>
        <location evidence="2">Secreted</location>
    </subcellularLocation>
</comment>
<comment type="tissue specificity">
    <text evidence="5">Expressed by the venom duct.</text>
</comment>
<comment type="domain">
    <text evidence="4">The cysteine framework is XXIX (CCC-C-CC-C-C).</text>
</comment>
<comment type="PTM">
    <text evidence="4">May contain 4 disulfide bonds.</text>
</comment>
<comment type="pharmaceutical">
    <text evidence="5">Is a potential drug lead for the treatment of tuberculosis.</text>
</comment>
<comment type="similarity">
    <text evidence="4">Belongs to the conotoxin O1 superfamily.</text>
</comment>
<keyword id="KW-0903">Direct protein sequencing</keyword>
<keyword id="KW-1015">Disulfide bond</keyword>
<keyword id="KW-0528">Neurotoxin</keyword>
<keyword id="KW-0582">Pharmaceutical</keyword>
<keyword id="KW-0964">Secreted</keyword>
<keyword id="KW-0732">Signal</keyword>
<keyword id="KW-0800">Toxin</keyword>
<protein>
    <recommendedName>
        <fullName evidence="4">Conotoxin Cal29b</fullName>
    </recommendedName>
    <alternativeName>
        <fullName evidence="3">O1_cal29b</fullName>
    </alternativeName>
</protein>